<protein>
    <recommendedName>
        <fullName evidence="1">tRNA uridine(34) hydroxylase</fullName>
        <ecNumber evidence="1">1.14.-.-</ecNumber>
    </recommendedName>
    <alternativeName>
        <fullName evidence="1">tRNA hydroxylation protein O</fullName>
    </alternativeName>
</protein>
<feature type="chain" id="PRO_0000242932" description="tRNA uridine(34) hydroxylase">
    <location>
        <begin position="1"/>
        <end position="313"/>
    </location>
</feature>
<feature type="domain" description="Rhodanese" evidence="1">
    <location>
        <begin position="124"/>
        <end position="218"/>
    </location>
</feature>
<feature type="active site" description="Cysteine persulfide intermediate" evidence="1">
    <location>
        <position position="178"/>
    </location>
</feature>
<comment type="function">
    <text evidence="1">Catalyzes oxygen-dependent 5-hydroxyuridine (ho5U) modification at position 34 in tRNAs.</text>
</comment>
<comment type="catalytic activity">
    <reaction evidence="1">
        <text>uridine(34) in tRNA + AH2 + O2 = 5-hydroxyuridine(34) in tRNA + A + H2O</text>
        <dbReference type="Rhea" id="RHEA:64224"/>
        <dbReference type="Rhea" id="RHEA-COMP:11727"/>
        <dbReference type="Rhea" id="RHEA-COMP:13381"/>
        <dbReference type="ChEBI" id="CHEBI:13193"/>
        <dbReference type="ChEBI" id="CHEBI:15377"/>
        <dbReference type="ChEBI" id="CHEBI:15379"/>
        <dbReference type="ChEBI" id="CHEBI:17499"/>
        <dbReference type="ChEBI" id="CHEBI:65315"/>
        <dbReference type="ChEBI" id="CHEBI:136877"/>
    </reaction>
</comment>
<comment type="similarity">
    <text evidence="1">Belongs to the TrhO family.</text>
</comment>
<accession>Q3K8S7</accession>
<gene>
    <name evidence="1" type="primary">trhO</name>
    <name type="ordered locus">Pfl01_4090</name>
</gene>
<proteinExistence type="inferred from homology"/>
<reference key="1">
    <citation type="journal article" date="2009" name="Genome Biol.">
        <title>Genomic and genetic analyses of diversity and plant interactions of Pseudomonas fluorescens.</title>
        <authorList>
            <person name="Silby M.W."/>
            <person name="Cerdeno-Tarraga A.M."/>
            <person name="Vernikos G.S."/>
            <person name="Giddens S.R."/>
            <person name="Jackson R.W."/>
            <person name="Preston G.M."/>
            <person name="Zhang X.-X."/>
            <person name="Moon C.D."/>
            <person name="Gehrig S.M."/>
            <person name="Godfrey S.A.C."/>
            <person name="Knight C.G."/>
            <person name="Malone J.G."/>
            <person name="Robinson Z."/>
            <person name="Spiers A.J."/>
            <person name="Harris S."/>
            <person name="Challis G.L."/>
            <person name="Yaxley A.M."/>
            <person name="Harris D."/>
            <person name="Seeger K."/>
            <person name="Murphy L."/>
            <person name="Rutter S."/>
            <person name="Squares R."/>
            <person name="Quail M.A."/>
            <person name="Saunders E."/>
            <person name="Mavromatis K."/>
            <person name="Brettin T.S."/>
            <person name="Bentley S.D."/>
            <person name="Hothersall J."/>
            <person name="Stephens E."/>
            <person name="Thomas C.M."/>
            <person name="Parkhill J."/>
            <person name="Levy S.B."/>
            <person name="Rainey P.B."/>
            <person name="Thomson N.R."/>
        </authorList>
    </citation>
    <scope>NUCLEOTIDE SEQUENCE [LARGE SCALE GENOMIC DNA]</scope>
    <source>
        <strain>Pf0-1</strain>
    </source>
</reference>
<name>TRHO_PSEPF</name>
<dbReference type="EC" id="1.14.-.-" evidence="1"/>
<dbReference type="EMBL" id="CP000094">
    <property type="protein sequence ID" value="ABA75827.1"/>
    <property type="molecule type" value="Genomic_DNA"/>
</dbReference>
<dbReference type="RefSeq" id="WP_011335384.1">
    <property type="nucleotide sequence ID" value="NC_007492.2"/>
</dbReference>
<dbReference type="SMR" id="Q3K8S7"/>
<dbReference type="KEGG" id="pfo:Pfl01_4090"/>
<dbReference type="eggNOG" id="COG1054">
    <property type="taxonomic scope" value="Bacteria"/>
</dbReference>
<dbReference type="HOGENOM" id="CLU_038878_0_0_6"/>
<dbReference type="Proteomes" id="UP000002704">
    <property type="component" value="Chromosome"/>
</dbReference>
<dbReference type="GO" id="GO:0016705">
    <property type="term" value="F:oxidoreductase activity, acting on paired donors, with incorporation or reduction of molecular oxygen"/>
    <property type="evidence" value="ECO:0007669"/>
    <property type="project" value="UniProtKB-UniRule"/>
</dbReference>
<dbReference type="GO" id="GO:0006400">
    <property type="term" value="P:tRNA modification"/>
    <property type="evidence" value="ECO:0007669"/>
    <property type="project" value="UniProtKB-UniRule"/>
</dbReference>
<dbReference type="CDD" id="cd01518">
    <property type="entry name" value="RHOD_YceA"/>
    <property type="match status" value="1"/>
</dbReference>
<dbReference type="Gene3D" id="3.30.70.100">
    <property type="match status" value="1"/>
</dbReference>
<dbReference type="Gene3D" id="3.40.250.10">
    <property type="entry name" value="Rhodanese-like domain"/>
    <property type="match status" value="1"/>
</dbReference>
<dbReference type="HAMAP" id="MF_00469">
    <property type="entry name" value="TrhO"/>
    <property type="match status" value="1"/>
</dbReference>
<dbReference type="InterPro" id="IPR001763">
    <property type="entry name" value="Rhodanese-like_dom"/>
</dbReference>
<dbReference type="InterPro" id="IPR036873">
    <property type="entry name" value="Rhodanese-like_dom_sf"/>
</dbReference>
<dbReference type="InterPro" id="IPR020936">
    <property type="entry name" value="TrhO"/>
</dbReference>
<dbReference type="InterPro" id="IPR040503">
    <property type="entry name" value="TRHO_N"/>
</dbReference>
<dbReference type="NCBIfam" id="NF001136">
    <property type="entry name" value="PRK00142.1-4"/>
    <property type="match status" value="1"/>
</dbReference>
<dbReference type="PANTHER" id="PTHR43268:SF3">
    <property type="entry name" value="RHODANESE-LIKE DOMAIN-CONTAINING PROTEIN 7-RELATED"/>
    <property type="match status" value="1"/>
</dbReference>
<dbReference type="PANTHER" id="PTHR43268">
    <property type="entry name" value="THIOSULFATE SULFURTRANSFERASE/RHODANESE-LIKE DOMAIN-CONTAINING PROTEIN 2"/>
    <property type="match status" value="1"/>
</dbReference>
<dbReference type="Pfam" id="PF00581">
    <property type="entry name" value="Rhodanese"/>
    <property type="match status" value="1"/>
</dbReference>
<dbReference type="Pfam" id="PF17773">
    <property type="entry name" value="UPF0176_N"/>
    <property type="match status" value="1"/>
</dbReference>
<dbReference type="SMART" id="SM00450">
    <property type="entry name" value="RHOD"/>
    <property type="match status" value="1"/>
</dbReference>
<dbReference type="SUPFAM" id="SSF52821">
    <property type="entry name" value="Rhodanese/Cell cycle control phosphatase"/>
    <property type="match status" value="1"/>
</dbReference>
<dbReference type="PROSITE" id="PS50206">
    <property type="entry name" value="RHODANESE_3"/>
    <property type="match status" value="1"/>
</dbReference>
<evidence type="ECO:0000255" key="1">
    <source>
        <dbReference type="HAMAP-Rule" id="MF_00469"/>
    </source>
</evidence>
<organism>
    <name type="scientific">Pseudomonas fluorescens (strain Pf0-1)</name>
    <dbReference type="NCBI Taxonomy" id="205922"/>
    <lineage>
        <taxon>Bacteria</taxon>
        <taxon>Pseudomonadati</taxon>
        <taxon>Pseudomonadota</taxon>
        <taxon>Gammaproteobacteria</taxon>
        <taxon>Pseudomonadales</taxon>
        <taxon>Pseudomonadaceae</taxon>
        <taxon>Pseudomonas</taxon>
    </lineage>
</organism>
<sequence>MTQPIVVAALYKFVTLEDYVNLREPLLQAMVDNGIKGTLLIAEEGINGTVSGSREGIDGLLAWLRNDPRMVDIDHKESYCDEQPFYRTKVKLKKEIVTLGVEGVDPNKKVGTYVEPKDWNALISDPEVLLIDTRNDYEVSIGTFEGAIDPKTTSFREFPDYIKEHFDPAVHKKVAMFCTGGIRCEKASSYMLGEGFEEVYHLKGGILKYLEEVPQEETKWQGDCFVFDNRVTVRHDLSEGDYDQCHACRTPVSVEDRASEHYVAGISCPHCWDTLSEKTRRSAIDRQKQIELAKARNMPHPIGYNYKQASTEA</sequence>
<keyword id="KW-0560">Oxidoreductase</keyword>
<keyword id="KW-0819">tRNA processing</keyword>